<evidence type="ECO:0000250" key="1"/>
<evidence type="ECO:0000255" key="2">
    <source>
        <dbReference type="PROSITE-ProRule" id="PRU00175"/>
    </source>
</evidence>
<evidence type="ECO:0000255" key="3">
    <source>
        <dbReference type="PROSITE-ProRule" id="PRU00723"/>
    </source>
</evidence>
<evidence type="ECO:0000256" key="4">
    <source>
        <dbReference type="SAM" id="MobiDB-lite"/>
    </source>
</evidence>
<evidence type="ECO:0000305" key="5"/>
<name>CWC24_EREGS</name>
<gene>
    <name type="primary">CWC24</name>
    <name type="ordered locus">AFR499C</name>
</gene>
<feature type="chain" id="PRO_0000055883" description="Pre-mRNA-splicing factor CWC24">
    <location>
        <begin position="1"/>
        <end position="250"/>
    </location>
</feature>
<feature type="zinc finger region" description="C3H1-type" evidence="3">
    <location>
        <begin position="101"/>
        <end position="129"/>
    </location>
</feature>
<feature type="zinc finger region" description="RING-type" evidence="2">
    <location>
        <begin position="158"/>
        <end position="196"/>
    </location>
</feature>
<feature type="region of interest" description="Disordered" evidence="4">
    <location>
        <begin position="44"/>
        <end position="89"/>
    </location>
</feature>
<feature type="region of interest" description="Disordered" evidence="4">
    <location>
        <begin position="213"/>
        <end position="250"/>
    </location>
</feature>
<feature type="compositionally biased region" description="Basic and acidic residues" evidence="4">
    <location>
        <begin position="72"/>
        <end position="82"/>
    </location>
</feature>
<feature type="compositionally biased region" description="Basic and acidic residues" evidence="4">
    <location>
        <begin position="241"/>
        <end position="250"/>
    </location>
</feature>
<reference key="1">
    <citation type="journal article" date="2004" name="Science">
        <title>The Ashbya gossypii genome as a tool for mapping the ancient Saccharomyces cerevisiae genome.</title>
        <authorList>
            <person name="Dietrich F.S."/>
            <person name="Voegeli S."/>
            <person name="Brachat S."/>
            <person name="Lerch A."/>
            <person name="Gates K."/>
            <person name="Steiner S."/>
            <person name="Mohr C."/>
            <person name="Poehlmann R."/>
            <person name="Luedi P."/>
            <person name="Choi S."/>
            <person name="Wing R.A."/>
            <person name="Flavier A."/>
            <person name="Gaffney T.D."/>
            <person name="Philippsen P."/>
        </authorList>
    </citation>
    <scope>NUCLEOTIDE SEQUENCE [LARGE SCALE GENOMIC DNA]</scope>
    <source>
        <strain>ATCC 10895 / CBS 109.51 / FGSC 9923 / NRRL Y-1056</strain>
    </source>
</reference>
<reference key="2">
    <citation type="journal article" date="2013" name="G3 (Bethesda)">
        <title>Genomes of Ashbya fungi isolated from insects reveal four mating-type loci, numerous translocations, lack of transposons, and distinct gene duplications.</title>
        <authorList>
            <person name="Dietrich F.S."/>
            <person name="Voegeli S."/>
            <person name="Kuo S."/>
            <person name="Philippsen P."/>
        </authorList>
    </citation>
    <scope>GENOME REANNOTATION</scope>
    <source>
        <strain>ATCC 10895 / CBS 109.51 / FGSC 9923 / NRRL Y-1056</strain>
    </source>
</reference>
<comment type="function">
    <text evidence="1">Involved in pre-mRNA splicing.</text>
</comment>
<comment type="subunit">
    <text evidence="1">Associated with the spliceosome.</text>
</comment>
<comment type="subcellular location">
    <subcellularLocation>
        <location evidence="1">Nucleus</location>
    </subcellularLocation>
</comment>
<comment type="similarity">
    <text evidence="5">Belongs to the CWC24 family.</text>
</comment>
<proteinExistence type="inferred from homology"/>
<dbReference type="EMBL" id="AE016819">
    <property type="protein sequence ID" value="AAS53870.1"/>
    <property type="molecule type" value="Genomic_DNA"/>
</dbReference>
<dbReference type="RefSeq" id="NP_986046.1">
    <property type="nucleotide sequence ID" value="NM_212182.1"/>
</dbReference>
<dbReference type="SMR" id="Q752S4"/>
<dbReference type="STRING" id="284811.Q752S4"/>
<dbReference type="EnsemblFungi" id="AAS53870">
    <property type="protein sequence ID" value="AAS53870"/>
    <property type="gene ID" value="AGOS_AFR499C"/>
</dbReference>
<dbReference type="GeneID" id="4622325"/>
<dbReference type="KEGG" id="ago:AGOS_AFR499C"/>
<dbReference type="eggNOG" id="KOG1813">
    <property type="taxonomic scope" value="Eukaryota"/>
</dbReference>
<dbReference type="HOGENOM" id="CLU_050460_3_0_1"/>
<dbReference type="InParanoid" id="Q752S4"/>
<dbReference type="OMA" id="DYKSPIK"/>
<dbReference type="OrthoDB" id="25761at2759"/>
<dbReference type="Proteomes" id="UP000000591">
    <property type="component" value="Chromosome VI"/>
</dbReference>
<dbReference type="GO" id="GO:0000974">
    <property type="term" value="C:Prp19 complex"/>
    <property type="evidence" value="ECO:0007669"/>
    <property type="project" value="EnsemblFungi"/>
</dbReference>
<dbReference type="GO" id="GO:0005684">
    <property type="term" value="C:U2-type spliceosomal complex"/>
    <property type="evidence" value="ECO:0000318"/>
    <property type="project" value="GO_Central"/>
</dbReference>
<dbReference type="GO" id="GO:0003677">
    <property type="term" value="F:DNA binding"/>
    <property type="evidence" value="ECO:0007669"/>
    <property type="project" value="UniProtKB-KW"/>
</dbReference>
<dbReference type="GO" id="GO:0008270">
    <property type="term" value="F:zinc ion binding"/>
    <property type="evidence" value="ECO:0007669"/>
    <property type="project" value="UniProtKB-KW"/>
</dbReference>
<dbReference type="GO" id="GO:0000349">
    <property type="term" value="P:generation of catalytic spliceosome for first transesterification step"/>
    <property type="evidence" value="ECO:0007669"/>
    <property type="project" value="EnsemblFungi"/>
</dbReference>
<dbReference type="GO" id="GO:0034247">
    <property type="term" value="P:snoRNA splicing"/>
    <property type="evidence" value="ECO:0000318"/>
    <property type="project" value="GO_Central"/>
</dbReference>
<dbReference type="CDD" id="cd16539">
    <property type="entry name" value="RING-HC_RNF113A_B"/>
    <property type="match status" value="1"/>
</dbReference>
<dbReference type="FunFam" id="4.10.1000.10:FF:000041">
    <property type="entry name" value="Pre-mRNA-splicing factor CWC24"/>
    <property type="match status" value="1"/>
</dbReference>
<dbReference type="Gene3D" id="4.10.1000.10">
    <property type="entry name" value="Zinc finger, CCCH-type"/>
    <property type="match status" value="1"/>
</dbReference>
<dbReference type="Gene3D" id="3.30.40.10">
    <property type="entry name" value="Zinc/RING finger domain, C3HC4 (zinc finger)"/>
    <property type="match status" value="1"/>
</dbReference>
<dbReference type="InterPro" id="IPR039971">
    <property type="entry name" value="CWC24-like"/>
</dbReference>
<dbReference type="InterPro" id="IPR000571">
    <property type="entry name" value="Znf_CCCH"/>
</dbReference>
<dbReference type="InterPro" id="IPR036855">
    <property type="entry name" value="Znf_CCCH_sf"/>
</dbReference>
<dbReference type="InterPro" id="IPR001841">
    <property type="entry name" value="Znf_RING"/>
</dbReference>
<dbReference type="InterPro" id="IPR013083">
    <property type="entry name" value="Znf_RING/FYVE/PHD"/>
</dbReference>
<dbReference type="PANTHER" id="PTHR12930:SF0">
    <property type="entry name" value="RING FINGER PROTEIN 113B"/>
    <property type="match status" value="1"/>
</dbReference>
<dbReference type="PANTHER" id="PTHR12930">
    <property type="entry name" value="ZINC FINGER PROTEIN 183"/>
    <property type="match status" value="1"/>
</dbReference>
<dbReference type="Pfam" id="PF13923">
    <property type="entry name" value="zf-C3HC4_2"/>
    <property type="match status" value="1"/>
</dbReference>
<dbReference type="Pfam" id="PF00642">
    <property type="entry name" value="zf-CCCH"/>
    <property type="match status" value="1"/>
</dbReference>
<dbReference type="SMART" id="SM00184">
    <property type="entry name" value="RING"/>
    <property type="match status" value="1"/>
</dbReference>
<dbReference type="SMART" id="SM00356">
    <property type="entry name" value="ZnF_C3H1"/>
    <property type="match status" value="1"/>
</dbReference>
<dbReference type="SUPFAM" id="SSF90229">
    <property type="entry name" value="CCCH zinc finger"/>
    <property type="match status" value="1"/>
</dbReference>
<dbReference type="SUPFAM" id="SSF57850">
    <property type="entry name" value="RING/U-box"/>
    <property type="match status" value="1"/>
</dbReference>
<dbReference type="PROSITE" id="PS50103">
    <property type="entry name" value="ZF_C3H1"/>
    <property type="match status" value="1"/>
</dbReference>
<dbReference type="PROSITE" id="PS50089">
    <property type="entry name" value="ZF_RING_2"/>
    <property type="match status" value="1"/>
</dbReference>
<organism>
    <name type="scientific">Eremothecium gossypii (strain ATCC 10895 / CBS 109.51 / FGSC 9923 / NRRL Y-1056)</name>
    <name type="common">Yeast</name>
    <name type="synonym">Ashbya gossypii</name>
    <dbReference type="NCBI Taxonomy" id="284811"/>
    <lineage>
        <taxon>Eukaryota</taxon>
        <taxon>Fungi</taxon>
        <taxon>Dikarya</taxon>
        <taxon>Ascomycota</taxon>
        <taxon>Saccharomycotina</taxon>
        <taxon>Saccharomycetes</taxon>
        <taxon>Saccharomycetales</taxon>
        <taxon>Saccharomycetaceae</taxon>
        <taxon>Eremothecium</taxon>
    </lineage>
</organism>
<sequence>MFRKRNVKGSQQKKAALRVVEDDVECLATPPVVPAKKRKIRELDDTSRSAVRASGFGRDHVSAGTQEAVARATDDAPDRRAESSGARTAVGSNVRTRVVMDYQPDVCKDYRQTGFCGYGDSCKFLHSRDDFRAGWRLNEEWKVGQTEARDLDSIPFRCVLCRGHYRAPVRTRCGHYFCGGCFARRVRETRQCAVCGADTQGVAQSAARLRELLAAGAGAGDSPDDTPAEEEPRSPGEPAAGEERRGAESG</sequence>
<protein>
    <recommendedName>
        <fullName>Pre-mRNA-splicing factor CWC24</fullName>
    </recommendedName>
</protein>
<accession>Q752S4</accession>
<keyword id="KW-0238">DNA-binding</keyword>
<keyword id="KW-0479">Metal-binding</keyword>
<keyword id="KW-0507">mRNA processing</keyword>
<keyword id="KW-0508">mRNA splicing</keyword>
<keyword id="KW-0539">Nucleus</keyword>
<keyword id="KW-1185">Reference proteome</keyword>
<keyword id="KW-0747">Spliceosome</keyword>
<keyword id="KW-0862">Zinc</keyword>
<keyword id="KW-0863">Zinc-finger</keyword>